<gene>
    <name evidence="1" type="primary">rlmF</name>
    <name type="ordered locus">SbBS512_E2543</name>
</gene>
<evidence type="ECO:0000255" key="1">
    <source>
        <dbReference type="HAMAP-Rule" id="MF_01848"/>
    </source>
</evidence>
<evidence type="ECO:0000305" key="2"/>
<name>RLMF_SHIB3</name>
<reference key="1">
    <citation type="submission" date="2008-05" db="EMBL/GenBank/DDBJ databases">
        <title>Complete sequence of Shigella boydii serotype 18 strain BS512.</title>
        <authorList>
            <person name="Rasko D.A."/>
            <person name="Rosovitz M."/>
            <person name="Maurelli A.T."/>
            <person name="Myers G."/>
            <person name="Seshadri R."/>
            <person name="Cer R."/>
            <person name="Jiang L."/>
            <person name="Ravel J."/>
            <person name="Sebastian Y."/>
        </authorList>
    </citation>
    <scope>NUCLEOTIDE SEQUENCE [LARGE SCALE GENOMIC DNA]</scope>
    <source>
        <strain>CDC 3083-94 / BS512</strain>
    </source>
</reference>
<keyword id="KW-0963">Cytoplasm</keyword>
<keyword id="KW-0489">Methyltransferase</keyword>
<keyword id="KW-1185">Reference proteome</keyword>
<keyword id="KW-0698">rRNA processing</keyword>
<keyword id="KW-0949">S-adenosyl-L-methionine</keyword>
<keyword id="KW-0808">Transferase</keyword>
<sequence>MSAQKPGLHPRNRHHSRYDLATLCQVNPELRQFLTLTPAGEQSVDFANPLAVKALNKALLAHFYAVANWDIPDGFLCPPVPGRADYIHHLADLLAEASGTIPANASILDIGVGANCIYPLIGVHEYGWRFTGSETSSQALSSAQAIISANPGLNRAIRLRRQKESGAIFNGIIHKNEQYDATLCNPPFHDSAAAARAGSERKRRNLGLNKDDALNFGGQQQELWCEGGEVAFIKKMIEESKGFAKQVMWFTSLVSRGENLPPLYRALTDVGAVKVVKKEMAQGQKQSRFIAWTFMNDEQRRRFVNRQR</sequence>
<proteinExistence type="inferred from homology"/>
<accession>B2TVC2</accession>
<organism>
    <name type="scientific">Shigella boydii serotype 18 (strain CDC 3083-94 / BS512)</name>
    <dbReference type="NCBI Taxonomy" id="344609"/>
    <lineage>
        <taxon>Bacteria</taxon>
        <taxon>Pseudomonadati</taxon>
        <taxon>Pseudomonadota</taxon>
        <taxon>Gammaproteobacteria</taxon>
        <taxon>Enterobacterales</taxon>
        <taxon>Enterobacteriaceae</taxon>
        <taxon>Shigella</taxon>
    </lineage>
</organism>
<feature type="chain" id="PRO_0000349967" description="Ribosomal RNA large subunit methyltransferase F">
    <location>
        <begin position="1"/>
        <end position="308"/>
    </location>
</feature>
<comment type="function">
    <text evidence="1">Specifically methylates the adenine in position 1618 of 23S rRNA.</text>
</comment>
<comment type="catalytic activity">
    <reaction evidence="1">
        <text>adenosine(1618) in 23S rRNA + S-adenosyl-L-methionine = N(6)-methyladenosine(1618) in 23S rRNA + S-adenosyl-L-homocysteine + H(+)</text>
        <dbReference type="Rhea" id="RHEA:16497"/>
        <dbReference type="Rhea" id="RHEA-COMP:10229"/>
        <dbReference type="Rhea" id="RHEA-COMP:10231"/>
        <dbReference type="ChEBI" id="CHEBI:15378"/>
        <dbReference type="ChEBI" id="CHEBI:57856"/>
        <dbReference type="ChEBI" id="CHEBI:59789"/>
        <dbReference type="ChEBI" id="CHEBI:74411"/>
        <dbReference type="ChEBI" id="CHEBI:74449"/>
        <dbReference type="EC" id="2.1.1.181"/>
    </reaction>
</comment>
<comment type="subcellular location">
    <subcellularLocation>
        <location evidence="1">Cytoplasm</location>
    </subcellularLocation>
</comment>
<comment type="similarity">
    <text evidence="1">Belongs to the methyltransferase superfamily. METTL16/RlmF family.</text>
</comment>
<comment type="sequence caution" evidence="2">
    <conflict type="erroneous initiation">
        <sequence resource="EMBL-CDS" id="ACD08252"/>
    </conflict>
</comment>
<protein>
    <recommendedName>
        <fullName evidence="1">Ribosomal RNA large subunit methyltransferase F</fullName>
        <ecNumber evidence="1">2.1.1.181</ecNumber>
    </recommendedName>
    <alternativeName>
        <fullName evidence="1">23S rRNA mA1618 methyltransferase</fullName>
    </alternativeName>
    <alternativeName>
        <fullName evidence="1">rRNA adenine N-6-methyltransferase</fullName>
    </alternativeName>
</protein>
<dbReference type="EC" id="2.1.1.181" evidence="1"/>
<dbReference type="EMBL" id="CP001063">
    <property type="protein sequence ID" value="ACD08252.1"/>
    <property type="status" value="ALT_INIT"/>
    <property type="molecule type" value="Genomic_DNA"/>
</dbReference>
<dbReference type="RefSeq" id="WP_001275941.1">
    <property type="nucleotide sequence ID" value="NC_010658.1"/>
</dbReference>
<dbReference type="SMR" id="B2TVC2"/>
<dbReference type="STRING" id="344609.SbBS512_E2543"/>
<dbReference type="GeneID" id="93776621"/>
<dbReference type="KEGG" id="sbc:SbBS512_E2543"/>
<dbReference type="HOGENOM" id="CLU_027534_3_0_6"/>
<dbReference type="Proteomes" id="UP000001030">
    <property type="component" value="Chromosome"/>
</dbReference>
<dbReference type="GO" id="GO:0005737">
    <property type="term" value="C:cytoplasm"/>
    <property type="evidence" value="ECO:0007669"/>
    <property type="project" value="UniProtKB-SubCell"/>
</dbReference>
<dbReference type="GO" id="GO:0052907">
    <property type="term" value="F:23S rRNA (adenine(1618)-N(6))-methyltransferase activity"/>
    <property type="evidence" value="ECO:0007669"/>
    <property type="project" value="UniProtKB-EC"/>
</dbReference>
<dbReference type="GO" id="GO:0070475">
    <property type="term" value="P:rRNA base methylation"/>
    <property type="evidence" value="ECO:0007669"/>
    <property type="project" value="TreeGrafter"/>
</dbReference>
<dbReference type="FunFam" id="3.40.50.150:FF:000045">
    <property type="entry name" value="Ribosomal RNA large subunit methyltransferase F"/>
    <property type="match status" value="1"/>
</dbReference>
<dbReference type="Gene3D" id="3.40.50.150">
    <property type="entry name" value="Vaccinia Virus protein VP39"/>
    <property type="match status" value="1"/>
</dbReference>
<dbReference type="HAMAP" id="MF_01848">
    <property type="entry name" value="23SrRNA_methyltr_F"/>
    <property type="match status" value="1"/>
</dbReference>
<dbReference type="InterPro" id="IPR010286">
    <property type="entry name" value="METTL16/RlmF"/>
</dbReference>
<dbReference type="InterPro" id="IPR016909">
    <property type="entry name" value="rRNA_lsu_MeTfrase_F"/>
</dbReference>
<dbReference type="InterPro" id="IPR029063">
    <property type="entry name" value="SAM-dependent_MTases_sf"/>
</dbReference>
<dbReference type="NCBIfam" id="NF008725">
    <property type="entry name" value="PRK11727.1"/>
    <property type="match status" value="1"/>
</dbReference>
<dbReference type="PANTHER" id="PTHR13393:SF0">
    <property type="entry name" value="RNA N6-ADENOSINE-METHYLTRANSFERASE METTL16"/>
    <property type="match status" value="1"/>
</dbReference>
<dbReference type="PANTHER" id="PTHR13393">
    <property type="entry name" value="SAM-DEPENDENT METHYLTRANSFERASE"/>
    <property type="match status" value="1"/>
</dbReference>
<dbReference type="Pfam" id="PF05971">
    <property type="entry name" value="Methyltransf_10"/>
    <property type="match status" value="1"/>
</dbReference>
<dbReference type="PIRSF" id="PIRSF029038">
    <property type="entry name" value="Mtase_YbiN_prd"/>
    <property type="match status" value="1"/>
</dbReference>
<dbReference type="SUPFAM" id="SSF53335">
    <property type="entry name" value="S-adenosyl-L-methionine-dependent methyltransferases"/>
    <property type="match status" value="1"/>
</dbReference>